<keyword id="KW-1003">Cell membrane</keyword>
<keyword id="KW-1015">Disulfide bond</keyword>
<keyword id="KW-0325">Glycoprotein</keyword>
<keyword id="KW-0407">Ion channel</keyword>
<keyword id="KW-0406">Ion transport</keyword>
<keyword id="KW-1071">Ligand-gated ion channel</keyword>
<keyword id="KW-0472">Membrane</keyword>
<keyword id="KW-0597">Phosphoprotein</keyword>
<keyword id="KW-0628">Postsynaptic cell membrane</keyword>
<keyword id="KW-0675">Receptor</keyword>
<keyword id="KW-1185">Reference proteome</keyword>
<keyword id="KW-0732">Signal</keyword>
<keyword id="KW-0770">Synapse</keyword>
<keyword id="KW-0812">Transmembrane</keyword>
<keyword id="KW-1133">Transmembrane helix</keyword>
<keyword id="KW-0813">Transport</keyword>
<feature type="signal peptide">
    <location>
        <begin position="1"/>
        <end position="18"/>
    </location>
</feature>
<feature type="chain" id="PRO_0000000325" description="Acetylcholine receptor subunit delta">
    <location>
        <begin position="19"/>
        <end position="513"/>
    </location>
</feature>
<feature type="topological domain" description="Extracellular">
    <location>
        <begin position="19"/>
        <end position="244"/>
    </location>
</feature>
<feature type="transmembrane region" description="Helical">
    <location>
        <begin position="245"/>
        <end position="269"/>
    </location>
</feature>
<feature type="transmembrane region" description="Helical">
    <location>
        <begin position="277"/>
        <end position="295"/>
    </location>
</feature>
<feature type="transmembrane region" description="Helical">
    <location>
        <begin position="311"/>
        <end position="332"/>
    </location>
</feature>
<feature type="topological domain" description="Cytoplasmic">
    <location>
        <begin position="333"/>
        <end position="467"/>
    </location>
</feature>
<feature type="transmembrane region" description="Helical">
    <location>
        <begin position="468"/>
        <end position="490"/>
    </location>
</feature>
<feature type="modified residue" description="Phosphotyrosine; by Tyr-kinases" evidence="1">
    <location>
        <position position="388"/>
    </location>
</feature>
<feature type="glycosylation site" description="N-linked (GlcNAc...) asparagine" evidence="3">
    <location>
        <position position="88"/>
    </location>
</feature>
<feature type="glycosylation site" description="N-linked (GlcNAc...) asparagine" evidence="3">
    <location>
        <position position="161"/>
    </location>
</feature>
<feature type="disulfide bond" evidence="1">
    <location>
        <begin position="148"/>
        <end position="162"/>
    </location>
</feature>
<proteinExistence type="inferred from homology"/>
<gene>
    <name type="primary">CHRND</name>
</gene>
<evidence type="ECO:0000250" key="1"/>
<evidence type="ECO:0000250" key="2">
    <source>
        <dbReference type="UniProtKB" id="P04759"/>
    </source>
</evidence>
<evidence type="ECO:0000255" key="3"/>
<evidence type="ECO:0000305" key="4"/>
<organism>
    <name type="scientific">Gallus gallus</name>
    <name type="common">Chicken</name>
    <dbReference type="NCBI Taxonomy" id="9031"/>
    <lineage>
        <taxon>Eukaryota</taxon>
        <taxon>Metazoa</taxon>
        <taxon>Chordata</taxon>
        <taxon>Craniata</taxon>
        <taxon>Vertebrata</taxon>
        <taxon>Euteleostomi</taxon>
        <taxon>Archelosauria</taxon>
        <taxon>Archosauria</taxon>
        <taxon>Dinosauria</taxon>
        <taxon>Saurischia</taxon>
        <taxon>Theropoda</taxon>
        <taxon>Coelurosauria</taxon>
        <taxon>Aves</taxon>
        <taxon>Neognathae</taxon>
        <taxon>Galloanserae</taxon>
        <taxon>Galliformes</taxon>
        <taxon>Phasianidae</taxon>
        <taxon>Phasianinae</taxon>
        <taxon>Gallus</taxon>
    </lineage>
</organism>
<reference key="1">
    <citation type="journal article" date="1984" name="Proc. Natl. Acad. Sci. U.S.A.">
        <title>Structure linkage, and sequence of the two genes encoding the delta and gamma subunits of the nicotinic acetylcholine receptor.</title>
        <authorList>
            <person name="Nef P."/>
            <person name="Mauron A."/>
            <person name="Stalder R."/>
            <person name="Alliod C."/>
            <person name="Ballivet M."/>
        </authorList>
    </citation>
    <scope>NUCLEOTIDE SEQUENCE [GENOMIC DNA]</scope>
</reference>
<reference key="2">
    <citation type="journal article" date="1990" name="EMBO J.">
        <title>Expression of the acetylcholine receptor delta-subunit gene in differentiating chick muscle cells is activated by an element that contains two 16 bp copies of a segment of the alpha-subunit enhancer.</title>
        <authorList>
            <person name="Wang X.M."/>
            <person name="Tsay H.J."/>
            <person name="Schmidt J."/>
        </authorList>
    </citation>
    <scope>NUCLEOTIDE SEQUENCE [GENOMIC DNA] OF 1-14</scope>
</reference>
<comment type="function">
    <text>After binding acetylcholine, the AChR responds by an extensive change in conformation that affects all subunits and leads to opening of an ion-conducting channel across the plasma membrane.</text>
</comment>
<comment type="catalytic activity">
    <reaction evidence="2">
        <text>K(+)(in) = K(+)(out)</text>
        <dbReference type="Rhea" id="RHEA:29463"/>
        <dbReference type="ChEBI" id="CHEBI:29103"/>
    </reaction>
</comment>
<comment type="catalytic activity">
    <reaction evidence="2">
        <text>Na(+)(in) = Na(+)(out)</text>
        <dbReference type="Rhea" id="RHEA:34963"/>
        <dbReference type="ChEBI" id="CHEBI:29101"/>
    </reaction>
</comment>
<comment type="subunit">
    <text>Pentamer of two alpha chains, and one each of the beta, delta, and gamma chains.</text>
</comment>
<comment type="subcellular location">
    <subcellularLocation>
        <location>Postsynaptic cell membrane</location>
        <topology>Multi-pass membrane protein</topology>
    </subcellularLocation>
    <subcellularLocation>
        <location>Cell membrane</location>
        <topology>Multi-pass membrane protein</topology>
    </subcellularLocation>
</comment>
<comment type="similarity">
    <text evidence="4">Belongs to the ligand-gated ion channel (TC 1.A.9) family. Acetylcholine receptor (TC 1.A.9.1) subfamily.</text>
</comment>
<name>ACHD_CHICK</name>
<dbReference type="EMBL" id="K02903">
    <property type="protein sequence ID" value="AAB59944.1"/>
    <property type="molecule type" value="Genomic_DNA"/>
</dbReference>
<dbReference type="EMBL" id="X52010">
    <property type="protein sequence ID" value="CAA36259.1"/>
    <property type="molecule type" value="Genomic_DNA"/>
</dbReference>
<dbReference type="PIR" id="A03176">
    <property type="entry name" value="ACCHD1"/>
</dbReference>
<dbReference type="SMR" id="P02717"/>
<dbReference type="ComplexPortal" id="CPX-254">
    <property type="entry name" value="Muscle-type nicotinic acetylcholine receptor complex, alpha1-beta1-delta-gamma"/>
</dbReference>
<dbReference type="FunCoup" id="P02717">
    <property type="interactions" value="191"/>
</dbReference>
<dbReference type="STRING" id="9031.ENSGALP00000054388"/>
<dbReference type="GlyCosmos" id="P02717">
    <property type="glycosylation" value="2 sites, No reported glycans"/>
</dbReference>
<dbReference type="GlyGen" id="P02717">
    <property type="glycosylation" value="3 sites"/>
</dbReference>
<dbReference type="PaxDb" id="9031-ENSGALP00000012809"/>
<dbReference type="VEuPathDB" id="HostDB:geneid_424940"/>
<dbReference type="eggNOG" id="KOG3645">
    <property type="taxonomic scope" value="Eukaryota"/>
</dbReference>
<dbReference type="InParanoid" id="P02717"/>
<dbReference type="OrthoDB" id="5975154at2759"/>
<dbReference type="PhylomeDB" id="P02717"/>
<dbReference type="Proteomes" id="UP000000539">
    <property type="component" value="Unassembled WGS sequence"/>
</dbReference>
<dbReference type="GO" id="GO:0005892">
    <property type="term" value="C:acetylcholine-gated channel complex"/>
    <property type="evidence" value="ECO:0000318"/>
    <property type="project" value="GO_Central"/>
</dbReference>
<dbReference type="GO" id="GO:0043005">
    <property type="term" value="C:neuron projection"/>
    <property type="evidence" value="ECO:0000318"/>
    <property type="project" value="GO_Central"/>
</dbReference>
<dbReference type="GO" id="GO:0005886">
    <property type="term" value="C:plasma membrane"/>
    <property type="evidence" value="ECO:0000318"/>
    <property type="project" value="GO_Central"/>
</dbReference>
<dbReference type="GO" id="GO:0045211">
    <property type="term" value="C:postsynaptic membrane"/>
    <property type="evidence" value="ECO:0007669"/>
    <property type="project" value="UniProtKB-SubCell"/>
</dbReference>
<dbReference type="GO" id="GO:0045202">
    <property type="term" value="C:synapse"/>
    <property type="evidence" value="ECO:0000318"/>
    <property type="project" value="GO_Central"/>
</dbReference>
<dbReference type="GO" id="GO:0015464">
    <property type="term" value="F:acetylcholine receptor activity"/>
    <property type="evidence" value="ECO:0000318"/>
    <property type="project" value="GO_Central"/>
</dbReference>
<dbReference type="GO" id="GO:0022848">
    <property type="term" value="F:acetylcholine-gated monoatomic cation-selective channel activity"/>
    <property type="evidence" value="ECO:0000318"/>
    <property type="project" value="GO_Central"/>
</dbReference>
<dbReference type="GO" id="GO:0095500">
    <property type="term" value="P:acetylcholine receptor signaling pathway"/>
    <property type="evidence" value="ECO:0000318"/>
    <property type="project" value="GO_Central"/>
</dbReference>
<dbReference type="GO" id="GO:0007268">
    <property type="term" value="P:chemical synaptic transmission"/>
    <property type="evidence" value="ECO:0000318"/>
    <property type="project" value="GO_Central"/>
</dbReference>
<dbReference type="GO" id="GO:0051899">
    <property type="term" value="P:membrane depolarization"/>
    <property type="evidence" value="ECO:0000318"/>
    <property type="project" value="GO_Central"/>
</dbReference>
<dbReference type="GO" id="GO:0034220">
    <property type="term" value="P:monoatomic ion transmembrane transport"/>
    <property type="evidence" value="ECO:0000318"/>
    <property type="project" value="GO_Central"/>
</dbReference>
<dbReference type="CDD" id="cd19028">
    <property type="entry name" value="LGIC_ECD_nAChR_D"/>
    <property type="match status" value="1"/>
</dbReference>
<dbReference type="CDD" id="cd19064">
    <property type="entry name" value="LGIC_TM_nAChR"/>
    <property type="match status" value="1"/>
</dbReference>
<dbReference type="FunFam" id="1.20.58.390:FF:000029">
    <property type="entry name" value="acetylcholine receptor subunit delta isoform X1"/>
    <property type="match status" value="1"/>
</dbReference>
<dbReference type="FunFam" id="1.20.58.390:FF:000010">
    <property type="entry name" value="Nicotinic acetylcholine receptor subunit epsilon"/>
    <property type="match status" value="1"/>
</dbReference>
<dbReference type="FunFam" id="2.70.170.10:FF:000012">
    <property type="entry name" value="Nicotinic acetylcholine receptor subunit gamma"/>
    <property type="match status" value="1"/>
</dbReference>
<dbReference type="Gene3D" id="2.70.170.10">
    <property type="entry name" value="Neurotransmitter-gated ion-channel ligand-binding domain"/>
    <property type="match status" value="1"/>
</dbReference>
<dbReference type="Gene3D" id="1.20.58.390">
    <property type="entry name" value="Neurotransmitter-gated ion-channel transmembrane domain"/>
    <property type="match status" value="2"/>
</dbReference>
<dbReference type="InterPro" id="IPR006202">
    <property type="entry name" value="Neur_chan_lig-bd"/>
</dbReference>
<dbReference type="InterPro" id="IPR036734">
    <property type="entry name" value="Neur_chan_lig-bd_sf"/>
</dbReference>
<dbReference type="InterPro" id="IPR006201">
    <property type="entry name" value="Neur_channel"/>
</dbReference>
<dbReference type="InterPro" id="IPR036719">
    <property type="entry name" value="Neuro-gated_channel_TM_sf"/>
</dbReference>
<dbReference type="InterPro" id="IPR038050">
    <property type="entry name" value="Neuro_actylchol_rec"/>
</dbReference>
<dbReference type="InterPro" id="IPR006029">
    <property type="entry name" value="Neurotrans-gated_channel_TM"/>
</dbReference>
<dbReference type="InterPro" id="IPR018000">
    <property type="entry name" value="Neurotransmitter_ion_chnl_CS"/>
</dbReference>
<dbReference type="InterPro" id="IPR002394">
    <property type="entry name" value="Nicotinic_acetylcholine_rcpt"/>
</dbReference>
<dbReference type="NCBIfam" id="TIGR00860">
    <property type="entry name" value="LIC"/>
    <property type="match status" value="1"/>
</dbReference>
<dbReference type="PANTHER" id="PTHR18945">
    <property type="entry name" value="NEUROTRANSMITTER GATED ION CHANNEL"/>
    <property type="match status" value="1"/>
</dbReference>
<dbReference type="Pfam" id="PF02931">
    <property type="entry name" value="Neur_chan_LBD"/>
    <property type="match status" value="1"/>
</dbReference>
<dbReference type="Pfam" id="PF02932">
    <property type="entry name" value="Neur_chan_memb"/>
    <property type="match status" value="1"/>
</dbReference>
<dbReference type="PRINTS" id="PR00254">
    <property type="entry name" value="NICOTINICR"/>
</dbReference>
<dbReference type="PRINTS" id="PR00252">
    <property type="entry name" value="NRIONCHANNEL"/>
</dbReference>
<dbReference type="SUPFAM" id="SSF90112">
    <property type="entry name" value="Neurotransmitter-gated ion-channel transmembrane pore"/>
    <property type="match status" value="1"/>
</dbReference>
<dbReference type="SUPFAM" id="SSF63712">
    <property type="entry name" value="Nicotinic receptor ligand binding domain-like"/>
    <property type="match status" value="1"/>
</dbReference>
<dbReference type="PROSITE" id="PS00236">
    <property type="entry name" value="NEUROTR_ION_CHANNEL"/>
    <property type="match status" value="1"/>
</dbReference>
<sequence length="513" mass="59011">MAVLLALFGALVLSGGLCVNQEERLIHHLFEERGYNKEVRPVASADEVVDVYLALTLSNLISLKEVDETLTTNVWVEQSWTDYRLQWNTSEFGGVDVLRLLPEMLWLPEIVLENNNDGLFEVAYYCNVLVYNTGYVYWLPPAIFRSACPINVNFFPFDWQNCTLKFSSLAYNAQEINMHLKEESDPETEKNYRVEWIIIDPEGFTENGEWEIIHRPARKNIHPSYPTESSEHQDITFYLIIKRKPLFYVINIVTPCVLIAFMAILVFYLPADSGEKMTLVISVLLAQSVFLLLVSQRLPATSHAIPLIGKYLLFIMLLVTAVVVICVVVLNFHFRTPSTHVMSDWVRGVFLEILPRLLHMSHPAESPAGAPCIRRCSSAGYIAKAEEYYSVKSRSELMFEKQSERHGLASRVTPARFAPAATSEEQLYDHLKPTLDEANFIVKHMREKNSYNEEKDNWNRVARTLDRLCLFLITPMLVVGTLWIFLMGIYNHPPPLPFSGDPFDYREENKRYI</sequence>
<accession>P02717</accession>
<protein>
    <recommendedName>
        <fullName>Acetylcholine receptor subunit delta</fullName>
    </recommendedName>
</protein>